<comment type="function">
    <text evidence="2">With S4 and S5 plays an important role in translational accuracy.</text>
</comment>
<comment type="function">
    <text evidence="2">Interacts with and stabilizes bases of the 16S rRNA that are involved in tRNA selection in the A site and with the mRNA backbone. Located at the interface of the 30S and 50S subunits, it traverses the body of the 30S subunit contacting proteins on the other side and probably holding the rRNA structure together. The combined cluster of proteins S8, S12 and S17 appears to hold together the shoulder and platform of the 30S subunit.</text>
</comment>
<comment type="subunit">
    <text evidence="2">Part of the 30S ribosomal subunit. Contacts proteins S8 and S17. May interact with IF1 in the 30S initiation complex.</text>
</comment>
<comment type="similarity">
    <text evidence="2">Belongs to the universal ribosomal protein uS12 family.</text>
</comment>
<name>RS12_GLAP5</name>
<keyword id="KW-0488">Methylation</keyword>
<keyword id="KW-1185">Reference proteome</keyword>
<keyword id="KW-0687">Ribonucleoprotein</keyword>
<keyword id="KW-0689">Ribosomal protein</keyword>
<keyword id="KW-0694">RNA-binding</keyword>
<keyword id="KW-0699">rRNA-binding</keyword>
<keyword id="KW-0820">tRNA-binding</keyword>
<organism>
    <name type="scientific">Glaesserella parasuis serovar 5 (strain SH0165)</name>
    <name type="common">Haemophilus parasuis</name>
    <dbReference type="NCBI Taxonomy" id="557723"/>
    <lineage>
        <taxon>Bacteria</taxon>
        <taxon>Pseudomonadati</taxon>
        <taxon>Pseudomonadota</taxon>
        <taxon>Gammaproteobacteria</taxon>
        <taxon>Pasteurellales</taxon>
        <taxon>Pasteurellaceae</taxon>
        <taxon>Glaesserella</taxon>
    </lineage>
</organism>
<gene>
    <name evidence="2" type="primary">rpsL</name>
    <name type="ordered locus">HAPS_1966</name>
</gene>
<accession>B8F7Z2</accession>
<dbReference type="EMBL" id="CP001321">
    <property type="protein sequence ID" value="ACL33444.1"/>
    <property type="molecule type" value="Genomic_DNA"/>
</dbReference>
<dbReference type="RefSeq" id="WP_005708967.1">
    <property type="nucleotide sequence ID" value="NC_011852.1"/>
</dbReference>
<dbReference type="SMR" id="B8F7Z2"/>
<dbReference type="STRING" id="557723.HAPS_1966"/>
<dbReference type="GeneID" id="66617882"/>
<dbReference type="KEGG" id="hap:HAPS_1966"/>
<dbReference type="HOGENOM" id="CLU_104295_1_2_6"/>
<dbReference type="Proteomes" id="UP000006743">
    <property type="component" value="Chromosome"/>
</dbReference>
<dbReference type="GO" id="GO:0015935">
    <property type="term" value="C:small ribosomal subunit"/>
    <property type="evidence" value="ECO:0007669"/>
    <property type="project" value="InterPro"/>
</dbReference>
<dbReference type="GO" id="GO:0019843">
    <property type="term" value="F:rRNA binding"/>
    <property type="evidence" value="ECO:0007669"/>
    <property type="project" value="UniProtKB-UniRule"/>
</dbReference>
<dbReference type="GO" id="GO:0003735">
    <property type="term" value="F:structural constituent of ribosome"/>
    <property type="evidence" value="ECO:0007669"/>
    <property type="project" value="InterPro"/>
</dbReference>
<dbReference type="GO" id="GO:0000049">
    <property type="term" value="F:tRNA binding"/>
    <property type="evidence" value="ECO:0007669"/>
    <property type="project" value="UniProtKB-UniRule"/>
</dbReference>
<dbReference type="GO" id="GO:0006412">
    <property type="term" value="P:translation"/>
    <property type="evidence" value="ECO:0007669"/>
    <property type="project" value="UniProtKB-UniRule"/>
</dbReference>
<dbReference type="CDD" id="cd03368">
    <property type="entry name" value="Ribosomal_S12"/>
    <property type="match status" value="1"/>
</dbReference>
<dbReference type="FunFam" id="2.40.50.140:FF:000001">
    <property type="entry name" value="30S ribosomal protein S12"/>
    <property type="match status" value="1"/>
</dbReference>
<dbReference type="Gene3D" id="2.40.50.140">
    <property type="entry name" value="Nucleic acid-binding proteins"/>
    <property type="match status" value="1"/>
</dbReference>
<dbReference type="HAMAP" id="MF_00403_B">
    <property type="entry name" value="Ribosomal_uS12_B"/>
    <property type="match status" value="1"/>
</dbReference>
<dbReference type="InterPro" id="IPR012340">
    <property type="entry name" value="NA-bd_OB-fold"/>
</dbReference>
<dbReference type="InterPro" id="IPR006032">
    <property type="entry name" value="Ribosomal_uS12"/>
</dbReference>
<dbReference type="InterPro" id="IPR005679">
    <property type="entry name" value="Ribosomal_uS12_bac"/>
</dbReference>
<dbReference type="NCBIfam" id="TIGR00981">
    <property type="entry name" value="rpsL_bact"/>
    <property type="match status" value="1"/>
</dbReference>
<dbReference type="PANTHER" id="PTHR11652">
    <property type="entry name" value="30S RIBOSOMAL PROTEIN S12 FAMILY MEMBER"/>
    <property type="match status" value="1"/>
</dbReference>
<dbReference type="Pfam" id="PF00164">
    <property type="entry name" value="Ribosom_S12_S23"/>
    <property type="match status" value="1"/>
</dbReference>
<dbReference type="PIRSF" id="PIRSF002133">
    <property type="entry name" value="Ribosomal_S12/S23"/>
    <property type="match status" value="1"/>
</dbReference>
<dbReference type="PRINTS" id="PR01034">
    <property type="entry name" value="RIBOSOMALS12"/>
</dbReference>
<dbReference type="SUPFAM" id="SSF50249">
    <property type="entry name" value="Nucleic acid-binding proteins"/>
    <property type="match status" value="1"/>
</dbReference>
<dbReference type="PROSITE" id="PS00055">
    <property type="entry name" value="RIBOSOMAL_S12"/>
    <property type="match status" value="1"/>
</dbReference>
<sequence length="124" mass="13765">MATINQLVRKPRVKKVVKSNVPALEACPQKRGVCTRVYTTTPKKPNSALRKVCRIRLTNGFEVTSYIGGEGHNLQEHSVVLIRGGRVKDLPGVRYHTVRGALDCAGVKDRKQGRSKYGVKRPKS</sequence>
<evidence type="ECO:0000250" key="1"/>
<evidence type="ECO:0000255" key="2">
    <source>
        <dbReference type="HAMAP-Rule" id="MF_00403"/>
    </source>
</evidence>
<evidence type="ECO:0000305" key="3"/>
<feature type="chain" id="PRO_1000134637" description="Small ribosomal subunit protein uS12">
    <location>
        <begin position="1"/>
        <end position="124"/>
    </location>
</feature>
<feature type="modified residue" description="3-methylthioaspartic acid" evidence="1">
    <location>
        <position position="89"/>
    </location>
</feature>
<protein>
    <recommendedName>
        <fullName evidence="2">Small ribosomal subunit protein uS12</fullName>
    </recommendedName>
    <alternativeName>
        <fullName evidence="3">30S ribosomal protein S12</fullName>
    </alternativeName>
</protein>
<proteinExistence type="inferred from homology"/>
<reference key="1">
    <citation type="journal article" date="2009" name="J. Bacteriol.">
        <title>Complete genome sequence of Haemophilus parasuis SH0165.</title>
        <authorList>
            <person name="Yue M."/>
            <person name="Yang F."/>
            <person name="Yang J."/>
            <person name="Bei W."/>
            <person name="Cai X."/>
            <person name="Chen L."/>
            <person name="Dong J."/>
            <person name="Zhou R."/>
            <person name="Jin M."/>
            <person name="Jin Q."/>
            <person name="Chen H."/>
        </authorList>
    </citation>
    <scope>NUCLEOTIDE SEQUENCE [LARGE SCALE GENOMIC DNA]</scope>
    <source>
        <strain>SH0165</strain>
    </source>
</reference>